<sequence>MRSGVIAQKVGMTRVYNDAGEHVPVTVLRMDGCQVVATRTVEKNGYTAVQLGAGQAKVKNTSKAMRGNFAVANVEPKAKVAEFRVSEDQLLEIGTEIKAGHFAAGQLVDVTGTTIGKGFAGAMKRHGFGGLRATHGVSVSHRSHGSTGSRQDPGKVFKNKKMAGHMGQTRVTTQNLEVVSTDEDRGLILIKGAVPGSKGAWIIVRDAVKSAAK</sequence>
<name>RL3_RHILW</name>
<reference key="1">
    <citation type="journal article" date="2010" name="Stand. Genomic Sci.">
        <title>Complete genome sequence of Rhizobium leguminosarum bv trifolii strain WSM2304, an effective microsymbiont of the South American clover Trifolium polymorphum.</title>
        <authorList>
            <person name="Reeve W."/>
            <person name="O'Hara G."/>
            <person name="Chain P."/>
            <person name="Ardley J."/>
            <person name="Brau L."/>
            <person name="Nandesena K."/>
            <person name="Tiwari R."/>
            <person name="Malfatti S."/>
            <person name="Kiss H."/>
            <person name="Lapidus A."/>
            <person name="Copeland A."/>
            <person name="Nolan M."/>
            <person name="Land M."/>
            <person name="Ivanova N."/>
            <person name="Mavromatis K."/>
            <person name="Markowitz V."/>
            <person name="Kyrpides N."/>
            <person name="Melino V."/>
            <person name="Denton M."/>
            <person name="Yates R."/>
            <person name="Howieson J."/>
        </authorList>
    </citation>
    <scope>NUCLEOTIDE SEQUENCE [LARGE SCALE GENOMIC DNA]</scope>
    <source>
        <strain>WSM2304</strain>
    </source>
</reference>
<protein>
    <recommendedName>
        <fullName evidence="1">Large ribosomal subunit protein uL3</fullName>
    </recommendedName>
    <alternativeName>
        <fullName evidence="2">50S ribosomal protein L3</fullName>
    </alternativeName>
</protein>
<evidence type="ECO:0000255" key="1">
    <source>
        <dbReference type="HAMAP-Rule" id="MF_01325"/>
    </source>
</evidence>
<evidence type="ECO:0000305" key="2"/>
<accession>B5ZYT5</accession>
<feature type="chain" id="PRO_1000141908" description="Large ribosomal subunit protein uL3">
    <location>
        <begin position="1"/>
        <end position="213"/>
    </location>
</feature>
<feature type="modified residue" description="N5-methylglutamine" evidence="1">
    <location>
        <position position="151"/>
    </location>
</feature>
<comment type="function">
    <text evidence="1">One of the primary rRNA binding proteins, it binds directly near the 3'-end of the 23S rRNA, where it nucleates assembly of the 50S subunit.</text>
</comment>
<comment type="subunit">
    <text evidence="1">Part of the 50S ribosomal subunit. Forms a cluster with proteins L14 and L19.</text>
</comment>
<comment type="PTM">
    <text evidence="1">Methylated by PrmB.</text>
</comment>
<comment type="similarity">
    <text evidence="1">Belongs to the universal ribosomal protein uL3 family.</text>
</comment>
<proteinExistence type="inferred from homology"/>
<keyword id="KW-0488">Methylation</keyword>
<keyword id="KW-1185">Reference proteome</keyword>
<keyword id="KW-0687">Ribonucleoprotein</keyword>
<keyword id="KW-0689">Ribosomal protein</keyword>
<keyword id="KW-0694">RNA-binding</keyword>
<keyword id="KW-0699">rRNA-binding</keyword>
<dbReference type="EMBL" id="CP001191">
    <property type="protein sequence ID" value="ACI54626.1"/>
    <property type="molecule type" value="Genomic_DNA"/>
</dbReference>
<dbReference type="RefSeq" id="WP_003587198.1">
    <property type="nucleotide sequence ID" value="NC_011369.1"/>
</dbReference>
<dbReference type="SMR" id="B5ZYT5"/>
<dbReference type="STRING" id="395492.Rleg2_1332"/>
<dbReference type="KEGG" id="rlt:Rleg2_1332"/>
<dbReference type="eggNOG" id="COG0087">
    <property type="taxonomic scope" value="Bacteria"/>
</dbReference>
<dbReference type="HOGENOM" id="CLU_044142_2_0_5"/>
<dbReference type="Proteomes" id="UP000008330">
    <property type="component" value="Chromosome"/>
</dbReference>
<dbReference type="GO" id="GO:0022625">
    <property type="term" value="C:cytosolic large ribosomal subunit"/>
    <property type="evidence" value="ECO:0007669"/>
    <property type="project" value="TreeGrafter"/>
</dbReference>
<dbReference type="GO" id="GO:0019843">
    <property type="term" value="F:rRNA binding"/>
    <property type="evidence" value="ECO:0007669"/>
    <property type="project" value="UniProtKB-UniRule"/>
</dbReference>
<dbReference type="GO" id="GO:0003735">
    <property type="term" value="F:structural constituent of ribosome"/>
    <property type="evidence" value="ECO:0007669"/>
    <property type="project" value="InterPro"/>
</dbReference>
<dbReference type="GO" id="GO:0006412">
    <property type="term" value="P:translation"/>
    <property type="evidence" value="ECO:0007669"/>
    <property type="project" value="UniProtKB-UniRule"/>
</dbReference>
<dbReference type="FunFam" id="2.40.30.10:FF:000004">
    <property type="entry name" value="50S ribosomal protein L3"/>
    <property type="match status" value="1"/>
</dbReference>
<dbReference type="FunFam" id="3.30.160.810:FF:000001">
    <property type="entry name" value="50S ribosomal protein L3"/>
    <property type="match status" value="1"/>
</dbReference>
<dbReference type="Gene3D" id="3.30.160.810">
    <property type="match status" value="1"/>
</dbReference>
<dbReference type="Gene3D" id="2.40.30.10">
    <property type="entry name" value="Translation factors"/>
    <property type="match status" value="1"/>
</dbReference>
<dbReference type="HAMAP" id="MF_01325_B">
    <property type="entry name" value="Ribosomal_uL3_B"/>
    <property type="match status" value="1"/>
</dbReference>
<dbReference type="InterPro" id="IPR000597">
    <property type="entry name" value="Ribosomal_uL3"/>
</dbReference>
<dbReference type="InterPro" id="IPR019927">
    <property type="entry name" value="Ribosomal_uL3_bac/org-type"/>
</dbReference>
<dbReference type="InterPro" id="IPR019926">
    <property type="entry name" value="Ribosomal_uL3_CS"/>
</dbReference>
<dbReference type="InterPro" id="IPR009000">
    <property type="entry name" value="Transl_B-barrel_sf"/>
</dbReference>
<dbReference type="NCBIfam" id="TIGR03625">
    <property type="entry name" value="L3_bact"/>
    <property type="match status" value="1"/>
</dbReference>
<dbReference type="PANTHER" id="PTHR11229">
    <property type="entry name" value="50S RIBOSOMAL PROTEIN L3"/>
    <property type="match status" value="1"/>
</dbReference>
<dbReference type="PANTHER" id="PTHR11229:SF16">
    <property type="entry name" value="LARGE RIBOSOMAL SUBUNIT PROTEIN UL3C"/>
    <property type="match status" value="1"/>
</dbReference>
<dbReference type="Pfam" id="PF00297">
    <property type="entry name" value="Ribosomal_L3"/>
    <property type="match status" value="1"/>
</dbReference>
<dbReference type="SUPFAM" id="SSF50447">
    <property type="entry name" value="Translation proteins"/>
    <property type="match status" value="1"/>
</dbReference>
<dbReference type="PROSITE" id="PS00474">
    <property type="entry name" value="RIBOSOMAL_L3"/>
    <property type="match status" value="1"/>
</dbReference>
<gene>
    <name evidence="1" type="primary">rplC</name>
    <name type="ordered locus">Rleg2_1332</name>
</gene>
<organism>
    <name type="scientific">Rhizobium leguminosarum bv. trifolii (strain WSM2304)</name>
    <dbReference type="NCBI Taxonomy" id="395492"/>
    <lineage>
        <taxon>Bacteria</taxon>
        <taxon>Pseudomonadati</taxon>
        <taxon>Pseudomonadota</taxon>
        <taxon>Alphaproteobacteria</taxon>
        <taxon>Hyphomicrobiales</taxon>
        <taxon>Rhizobiaceae</taxon>
        <taxon>Rhizobium/Agrobacterium group</taxon>
        <taxon>Rhizobium</taxon>
    </lineage>
</organism>